<sequence length="452" mass="54096">MRSEKEQRTGSRERGSVEIQFRDCQDNAAVNPKHKEEKKEIFSKVVIRRLPPSLSKDQLQEHLSPLPSFDYFEFFPADQSLYPHLFSRAYINFKNPEDIIIFRDRFDGYVFIDNKGQEYPAVVEFAPFQKVSKKKLKKKDAKAGTIEEDPEYRRFLENYSCDEEKSMANPETLLGEIEAKTRELIAKRTTPLLEYIKNKKLEKQRIREEKREERRRRELEKKRQREEEKRKRREEERQKRKEAEKQKKLSEKEIKIKLLKKCDRDDDVDSDRLKDKGDSGETEKNRWEKPGGHTKSKDSKDNRSQMENDKEQREGHGRRQRDKDHRGRDEERKRQRHHYEFDKFMRRKEETKWGKGYCQDRAKKDQHHGYSYCPETGDKLGKEDREDMGSRKERIRNKDRPAMQLYQPGARNRKRMGSGNKTFDFPPISPEHAGEHCYKTVIGTGSEKSADE</sequence>
<organism>
    <name type="scientific">Danio rerio</name>
    <name type="common">Zebrafish</name>
    <name type="synonym">Brachydanio rerio</name>
    <dbReference type="NCBI Taxonomy" id="7955"/>
    <lineage>
        <taxon>Eukaryota</taxon>
        <taxon>Metazoa</taxon>
        <taxon>Chordata</taxon>
        <taxon>Craniata</taxon>
        <taxon>Vertebrata</taxon>
        <taxon>Euteleostomi</taxon>
        <taxon>Actinopterygii</taxon>
        <taxon>Neopterygii</taxon>
        <taxon>Teleostei</taxon>
        <taxon>Ostariophysi</taxon>
        <taxon>Cypriniformes</taxon>
        <taxon>Danionidae</taxon>
        <taxon>Danioninae</taxon>
        <taxon>Danio</taxon>
    </lineage>
</organism>
<protein>
    <recommendedName>
        <fullName evidence="2">Regulator of nonsense transcripts 3A</fullName>
    </recommendedName>
    <alternativeName>
        <fullName evidence="2">Up-frameshift suppressor 3 homolog A</fullName>
    </alternativeName>
</protein>
<proteinExistence type="evidence at protein level"/>
<gene>
    <name evidence="10" type="primary">upf3a</name>
    <name type="ORF">si:dkey-21o13.6</name>
</gene>
<keyword id="KW-0025">Alternative splicing</keyword>
<keyword id="KW-0963">Cytoplasm</keyword>
<keyword id="KW-0509">mRNA transport</keyword>
<keyword id="KW-0866">Nonsense-mediated mRNA decay</keyword>
<keyword id="KW-0539">Nucleus</keyword>
<keyword id="KW-1185">Reference proteome</keyword>
<keyword id="KW-0694">RNA-binding</keyword>
<keyword id="KW-0813">Transport</keyword>
<feature type="chain" id="PRO_0000370745" description="Regulator of nonsense transcripts 3A">
    <location>
        <begin position="1"/>
        <end position="452"/>
    </location>
</feature>
<feature type="region of interest" description="Disordered" evidence="4">
    <location>
        <begin position="205"/>
        <end position="452"/>
    </location>
</feature>
<feature type="compositionally biased region" description="Basic and acidic residues" evidence="4">
    <location>
        <begin position="205"/>
        <end position="363"/>
    </location>
</feature>
<feature type="compositionally biased region" description="Basic and acidic residues" evidence="4">
    <location>
        <begin position="376"/>
        <end position="401"/>
    </location>
</feature>
<feature type="splice variant" id="VSP_053070" description="In isoform 1." evidence="7">
    <original>N</original>
    <variation>NKSVLVHQEKRTSQSEGPDQIGGALPA</variation>
    <location>
        <position position="397"/>
    </location>
</feature>
<evidence type="ECO:0000250" key="1"/>
<evidence type="ECO:0000250" key="2">
    <source>
        <dbReference type="UniProtKB" id="Q9H1J1"/>
    </source>
</evidence>
<evidence type="ECO:0000255" key="3"/>
<evidence type="ECO:0000256" key="4">
    <source>
        <dbReference type="SAM" id="MobiDB-lite"/>
    </source>
</evidence>
<evidence type="ECO:0000269" key="5">
    <source>
    </source>
</evidence>
<evidence type="ECO:0000269" key="6">
    <source>
    </source>
</evidence>
<evidence type="ECO:0000305" key="7"/>
<evidence type="ECO:0000312" key="8">
    <source>
        <dbReference type="EMBL" id="AAH95761.1"/>
    </source>
</evidence>
<evidence type="ECO:0000312" key="9">
    <source>
        <dbReference type="EMBL" id="CAQ15001.1"/>
    </source>
</evidence>
<evidence type="ECO:0000312" key="10">
    <source>
        <dbReference type="ZFIN" id="ZDB-GENE-060721-2"/>
    </source>
</evidence>
<name>REN3A_DANRE</name>
<reference key="1">
    <citation type="journal article" date="2013" name="Nature">
        <title>The zebrafish reference genome sequence and its relationship to the human genome.</title>
        <authorList>
            <person name="Howe K."/>
            <person name="Clark M.D."/>
            <person name="Torroja C.F."/>
            <person name="Torrance J."/>
            <person name="Berthelot C."/>
            <person name="Muffato M."/>
            <person name="Collins J.E."/>
            <person name="Humphray S."/>
            <person name="McLaren K."/>
            <person name="Matthews L."/>
            <person name="McLaren S."/>
            <person name="Sealy I."/>
            <person name="Caccamo M."/>
            <person name="Churcher C."/>
            <person name="Scott C."/>
            <person name="Barrett J.C."/>
            <person name="Koch R."/>
            <person name="Rauch G.J."/>
            <person name="White S."/>
            <person name="Chow W."/>
            <person name="Kilian B."/>
            <person name="Quintais L.T."/>
            <person name="Guerra-Assuncao J.A."/>
            <person name="Zhou Y."/>
            <person name="Gu Y."/>
            <person name="Yen J."/>
            <person name="Vogel J.H."/>
            <person name="Eyre T."/>
            <person name="Redmond S."/>
            <person name="Banerjee R."/>
            <person name="Chi J."/>
            <person name="Fu B."/>
            <person name="Langley E."/>
            <person name="Maguire S.F."/>
            <person name="Laird G.K."/>
            <person name="Lloyd D."/>
            <person name="Kenyon E."/>
            <person name="Donaldson S."/>
            <person name="Sehra H."/>
            <person name="Almeida-King J."/>
            <person name="Loveland J."/>
            <person name="Trevanion S."/>
            <person name="Jones M."/>
            <person name="Quail M."/>
            <person name="Willey D."/>
            <person name="Hunt A."/>
            <person name="Burton J."/>
            <person name="Sims S."/>
            <person name="McLay K."/>
            <person name="Plumb B."/>
            <person name="Davis J."/>
            <person name="Clee C."/>
            <person name="Oliver K."/>
            <person name="Clark R."/>
            <person name="Riddle C."/>
            <person name="Elliot D."/>
            <person name="Threadgold G."/>
            <person name="Harden G."/>
            <person name="Ware D."/>
            <person name="Begum S."/>
            <person name="Mortimore B."/>
            <person name="Kerry G."/>
            <person name="Heath P."/>
            <person name="Phillimore B."/>
            <person name="Tracey A."/>
            <person name="Corby N."/>
            <person name="Dunn M."/>
            <person name="Johnson C."/>
            <person name="Wood J."/>
            <person name="Clark S."/>
            <person name="Pelan S."/>
            <person name="Griffiths G."/>
            <person name="Smith M."/>
            <person name="Glithero R."/>
            <person name="Howden P."/>
            <person name="Barker N."/>
            <person name="Lloyd C."/>
            <person name="Stevens C."/>
            <person name="Harley J."/>
            <person name="Holt K."/>
            <person name="Panagiotidis G."/>
            <person name="Lovell J."/>
            <person name="Beasley H."/>
            <person name="Henderson C."/>
            <person name="Gordon D."/>
            <person name="Auger K."/>
            <person name="Wright D."/>
            <person name="Collins J."/>
            <person name="Raisen C."/>
            <person name="Dyer L."/>
            <person name="Leung K."/>
            <person name="Robertson L."/>
            <person name="Ambridge K."/>
            <person name="Leongamornlert D."/>
            <person name="McGuire S."/>
            <person name="Gilderthorp R."/>
            <person name="Griffiths C."/>
            <person name="Manthravadi D."/>
            <person name="Nichol S."/>
            <person name="Barker G."/>
            <person name="Whitehead S."/>
            <person name="Kay M."/>
            <person name="Brown J."/>
            <person name="Murnane C."/>
            <person name="Gray E."/>
            <person name="Humphries M."/>
            <person name="Sycamore N."/>
            <person name="Barker D."/>
            <person name="Saunders D."/>
            <person name="Wallis J."/>
            <person name="Babbage A."/>
            <person name="Hammond S."/>
            <person name="Mashreghi-Mohammadi M."/>
            <person name="Barr L."/>
            <person name="Martin S."/>
            <person name="Wray P."/>
            <person name="Ellington A."/>
            <person name="Matthews N."/>
            <person name="Ellwood M."/>
            <person name="Woodmansey R."/>
            <person name="Clark G."/>
            <person name="Cooper J."/>
            <person name="Tromans A."/>
            <person name="Grafham D."/>
            <person name="Skuce C."/>
            <person name="Pandian R."/>
            <person name="Andrews R."/>
            <person name="Harrison E."/>
            <person name="Kimberley A."/>
            <person name="Garnett J."/>
            <person name="Fosker N."/>
            <person name="Hall R."/>
            <person name="Garner P."/>
            <person name="Kelly D."/>
            <person name="Bird C."/>
            <person name="Palmer S."/>
            <person name="Gehring I."/>
            <person name="Berger A."/>
            <person name="Dooley C.M."/>
            <person name="Ersan-Urun Z."/>
            <person name="Eser C."/>
            <person name="Geiger H."/>
            <person name="Geisler M."/>
            <person name="Karotki L."/>
            <person name="Kirn A."/>
            <person name="Konantz J."/>
            <person name="Konantz M."/>
            <person name="Oberlander M."/>
            <person name="Rudolph-Geiger S."/>
            <person name="Teucke M."/>
            <person name="Lanz C."/>
            <person name="Raddatz G."/>
            <person name="Osoegawa K."/>
            <person name="Zhu B."/>
            <person name="Rapp A."/>
            <person name="Widaa S."/>
            <person name="Langford C."/>
            <person name="Yang F."/>
            <person name="Schuster S.C."/>
            <person name="Carter N.P."/>
            <person name="Harrow J."/>
            <person name="Ning Z."/>
            <person name="Herrero J."/>
            <person name="Searle S.M."/>
            <person name="Enright A."/>
            <person name="Geisler R."/>
            <person name="Plasterk R.H."/>
            <person name="Lee C."/>
            <person name="Westerfield M."/>
            <person name="de Jong P.J."/>
            <person name="Zon L.I."/>
            <person name="Postlethwait J.H."/>
            <person name="Nusslein-Volhard C."/>
            <person name="Hubbard T.J."/>
            <person name="Roest Crollius H."/>
            <person name="Rogers J."/>
            <person name="Stemple D.L."/>
        </authorList>
    </citation>
    <scope>NUCLEOTIDE SEQUENCE [LARGE SCALE GENOMIC DNA]</scope>
    <source>
        <strain>Tuebingen</strain>
    </source>
</reference>
<reference evidence="7 9" key="2">
    <citation type="submission" date="2005-05" db="EMBL/GenBank/DDBJ databases">
        <authorList>
            <consortium name="NIH - Zebrafish Gene Collection (ZGC) project"/>
        </authorList>
    </citation>
    <scope>NUCLEOTIDE SEQUENCE [LARGE SCALE MRNA] OF 1-196</scope>
    <source>
        <tissue evidence="8">Larval eye</tissue>
    </source>
</reference>
<reference evidence="7" key="3">
    <citation type="journal article" date="2006" name="RNA">
        <title>Functions of hUpf3a and hUpf3b in nonsense-mediated mRNA decay and translation.</title>
        <authorList>
            <person name="Kunz J.B."/>
            <person name="Neu-Yilik G."/>
            <person name="Hentze M.W."/>
            <person name="Kulozik A.E."/>
            <person name="Gehring N.H."/>
        </authorList>
    </citation>
    <scope>IDENTIFICATION (ISOFORM 2)</scope>
</reference>
<reference key="4">
    <citation type="journal article" date="2009" name="Mol. Cell. Biol.">
        <title>Nonsense-mediated mRNA decay effectors are essential for zebrafish embryonic development and survival.</title>
        <authorList>
            <person name="Wittkopp N."/>
            <person name="Huntzinger E."/>
            <person name="Weiler C."/>
            <person name="Sauliere J."/>
            <person name="Schmidt S."/>
            <person name="Sonawane M."/>
            <person name="Izaurralde E."/>
        </authorList>
    </citation>
    <scope>DEVELOPMENTAL STAGE</scope>
    <scope>DISRUPTION PHENOTYPE</scope>
</reference>
<accession>B0S733</accession>
<accession>Q4VBI8</accession>
<dbReference type="EMBL" id="BX601644">
    <property type="protein sequence ID" value="CAQ15001.1"/>
    <property type="status" value="ALT_INIT"/>
    <property type="molecule type" value="Genomic_DNA"/>
</dbReference>
<dbReference type="EMBL" id="BC095761">
    <property type="protein sequence ID" value="AAH95761.1"/>
    <property type="status" value="ALT_SEQ"/>
    <property type="molecule type" value="mRNA"/>
</dbReference>
<dbReference type="RefSeq" id="NP_001189377.1">
    <molecule id="B0S733-2"/>
    <property type="nucleotide sequence ID" value="NM_001202448.1"/>
</dbReference>
<dbReference type="RefSeq" id="XP_005167908.1">
    <property type="nucleotide sequence ID" value="XM_005167851.3"/>
</dbReference>
<dbReference type="RefSeq" id="XP_017213192.1">
    <property type="nucleotide sequence ID" value="XM_017357703.1"/>
</dbReference>
<dbReference type="RefSeq" id="XP_068079539.1">
    <molecule id="B0S733-1"/>
    <property type="nucleotide sequence ID" value="XM_068223438.1"/>
</dbReference>
<dbReference type="SMR" id="B0S733"/>
<dbReference type="FunCoup" id="B0S733">
    <property type="interactions" value="639"/>
</dbReference>
<dbReference type="IntAct" id="B0S733">
    <property type="interactions" value="2"/>
</dbReference>
<dbReference type="STRING" id="7955.ENSDARP00000114416"/>
<dbReference type="PaxDb" id="7955-ENSDARP00000114416"/>
<dbReference type="Ensembl" id="ENSDART00000100728">
    <molecule id="B0S733-1"/>
    <property type="protein sequence ID" value="ENSDARP00000091501"/>
    <property type="gene ID" value="ENSDARG00000069297"/>
</dbReference>
<dbReference type="Ensembl" id="ENSDART00000123005">
    <molecule id="B0S733-1"/>
    <property type="protein sequence ID" value="ENSDARP00000105134"/>
    <property type="gene ID" value="ENSDARG00000111067"/>
</dbReference>
<dbReference type="GeneID" id="566608"/>
<dbReference type="KEGG" id="dre:566608"/>
<dbReference type="AGR" id="ZFIN:ZDB-GENE-060721-2"/>
<dbReference type="CTD" id="65110"/>
<dbReference type="ZFIN" id="ZDB-GENE-060721-2">
    <property type="gene designation" value="upf3a"/>
</dbReference>
<dbReference type="eggNOG" id="KOG1295">
    <property type="taxonomic scope" value="Eukaryota"/>
</dbReference>
<dbReference type="InParanoid" id="B0S733"/>
<dbReference type="OMA" id="FSRVYFV"/>
<dbReference type="OrthoDB" id="18087at2759"/>
<dbReference type="PhylomeDB" id="B0S733"/>
<dbReference type="TreeFam" id="TF316034"/>
<dbReference type="Reactome" id="R-DRE-975957">
    <property type="pathway name" value="Nonsense Mediated Decay (NMD) enhanced by the Exon Junction Complex (EJC)"/>
</dbReference>
<dbReference type="PRO" id="PR:B0S733"/>
<dbReference type="Proteomes" id="UP000000437">
    <property type="component" value="Alternate scaffold 9"/>
</dbReference>
<dbReference type="Proteomes" id="UP000000437">
    <property type="component" value="Chromosome 9"/>
</dbReference>
<dbReference type="Bgee" id="ENSDARG00000069297">
    <property type="expression patterns" value="Expressed in brain and 6 other cell types or tissues"/>
</dbReference>
<dbReference type="ExpressionAtlas" id="B0S733">
    <property type="expression patterns" value="baseline and differential"/>
</dbReference>
<dbReference type="GO" id="GO:0005737">
    <property type="term" value="C:cytoplasm"/>
    <property type="evidence" value="ECO:0000318"/>
    <property type="project" value="GO_Central"/>
</dbReference>
<dbReference type="GO" id="GO:0005730">
    <property type="term" value="C:nucleolus"/>
    <property type="evidence" value="ECO:0000318"/>
    <property type="project" value="GO_Central"/>
</dbReference>
<dbReference type="GO" id="GO:0032991">
    <property type="term" value="C:protein-containing complex"/>
    <property type="evidence" value="ECO:0000353"/>
    <property type="project" value="ZFIN"/>
</dbReference>
<dbReference type="GO" id="GO:0003723">
    <property type="term" value="F:RNA binding"/>
    <property type="evidence" value="ECO:0007669"/>
    <property type="project" value="UniProtKB-KW"/>
</dbReference>
<dbReference type="GO" id="GO:0042162">
    <property type="term" value="F:telomeric DNA binding"/>
    <property type="evidence" value="ECO:0000318"/>
    <property type="project" value="GO_Central"/>
</dbReference>
<dbReference type="GO" id="GO:0051028">
    <property type="term" value="P:mRNA transport"/>
    <property type="evidence" value="ECO:0007669"/>
    <property type="project" value="UniProtKB-KW"/>
</dbReference>
<dbReference type="GO" id="GO:0000184">
    <property type="term" value="P:nuclear-transcribed mRNA catabolic process, nonsense-mediated decay"/>
    <property type="evidence" value="ECO:0007669"/>
    <property type="project" value="UniProtKB-KW"/>
</dbReference>
<dbReference type="GO" id="GO:0045727">
    <property type="term" value="P:positive regulation of translation"/>
    <property type="evidence" value="ECO:0000318"/>
    <property type="project" value="GO_Central"/>
</dbReference>
<dbReference type="CDD" id="cd12727">
    <property type="entry name" value="RRM_like_Smg4_UPF3A"/>
    <property type="match status" value="1"/>
</dbReference>
<dbReference type="FunFam" id="3.30.70.330:FF:000067">
    <property type="entry name" value="regulator of nonsense transcripts 3A isoform X2"/>
    <property type="match status" value="1"/>
</dbReference>
<dbReference type="Gene3D" id="3.30.70.330">
    <property type="match status" value="1"/>
</dbReference>
<dbReference type="InterPro" id="IPR012677">
    <property type="entry name" value="Nucleotide-bd_a/b_plait_sf"/>
</dbReference>
<dbReference type="InterPro" id="IPR035979">
    <property type="entry name" value="RBD_domain_sf"/>
</dbReference>
<dbReference type="InterPro" id="IPR039722">
    <property type="entry name" value="Upf3"/>
</dbReference>
<dbReference type="InterPro" id="IPR005120">
    <property type="entry name" value="UPF3_dom"/>
</dbReference>
<dbReference type="PANTHER" id="PTHR13112:SF2">
    <property type="entry name" value="REGULATOR OF NONSENSE TRANSCRIPTS 3A"/>
    <property type="match status" value="1"/>
</dbReference>
<dbReference type="PANTHER" id="PTHR13112">
    <property type="entry name" value="UPF3 REGULATOR OF NONSENSE TRANSCRIPTS-LIKE PROTEIN"/>
    <property type="match status" value="1"/>
</dbReference>
<dbReference type="Pfam" id="PF03467">
    <property type="entry name" value="Smg4_UPF3"/>
    <property type="match status" value="1"/>
</dbReference>
<dbReference type="SUPFAM" id="SSF54928">
    <property type="entry name" value="RNA-binding domain, RBD"/>
    <property type="match status" value="1"/>
</dbReference>
<comment type="function">
    <text evidence="1">Involved in nonsense-mediated decay (NMD) of mRNAs containing premature stop codons by associating with the nuclear exon junction complex (EJC) and serving as link between the EJC core and NMD machinery. Recruits UPF2 at the cytoplasmic side of the nuclear envelope and the subsequent formation of an UPF1-UPF2-UPF3 surveillance complex (including UPF1 bound to release factors at the stalled ribosome) is believed to activate NMD. Binds spliced mRNA upstream of exon-exon junctions (By similarity).</text>
</comment>
<comment type="interaction">
    <interactant intactId="EBI-21405307">
        <id>B0S733</id>
    </interactant>
    <interactant intactId="EBI-21405335">
        <id>Q7ZTX2</id>
        <label>wdr5</label>
    </interactant>
    <organismsDiffer>false</organismsDiffer>
    <experiments>3</experiments>
</comment>
<comment type="subcellular location">
    <subcellularLocation>
        <location evidence="2">Nucleus</location>
    </subcellularLocation>
    <subcellularLocation>
        <location evidence="2">Cytoplasm</location>
    </subcellularLocation>
    <text evidence="2">Shuttling between the nucleus and the cytoplasm.</text>
</comment>
<comment type="alternative products">
    <event type="alternative splicing"/>
    <isoform>
        <id>B0S733-1</id>
        <name evidence="5">2</name>
        <sequence type="displayed"/>
    </isoform>
    <isoform>
        <id>B0S733-2</id>
        <name>1</name>
        <sequence type="described" ref="VSP_053070"/>
    </isoform>
</comment>
<comment type="developmental stage">
    <text evidence="6">Expressed during early cleavage, gastrulation and at 1 day post-fertilization.</text>
</comment>
<comment type="disruption phenotype">
    <text evidence="6">Morpholino knockdown results in a weakly abnormal brain patterning during development that does not affect embryo viability at 5 days post-fertilization.</text>
</comment>
<comment type="similarity">
    <text evidence="3">Belongs to the RENT3 family.</text>
</comment>
<comment type="sequence caution" evidence="7">
    <conflict type="miscellaneous discrepancy">
        <sequence resource="EMBL-CDS" id="AAH95761"/>
    </conflict>
    <text>Contaminating sequence. Potential poly-A sequence.</text>
</comment>
<comment type="sequence caution" evidence="7">
    <conflict type="erroneous initiation">
        <sequence resource="EMBL-CDS" id="CAQ15001"/>
    </conflict>
</comment>